<evidence type="ECO:0000250" key="1"/>
<evidence type="ECO:0000250" key="2">
    <source>
        <dbReference type="UniProtKB" id="P02318"/>
    </source>
</evidence>
<evidence type="ECO:0000305" key="3"/>
<keyword id="KW-0158">Chromosome</keyword>
<keyword id="KW-0217">Developmental protein</keyword>
<keyword id="KW-0221">Differentiation</keyword>
<keyword id="KW-1015">Disulfide bond</keyword>
<keyword id="KW-0226">DNA condensation</keyword>
<keyword id="KW-0238">DNA-binding</keyword>
<keyword id="KW-0544">Nucleosome core</keyword>
<keyword id="KW-0539">Nucleus</keyword>
<keyword id="KW-1185">Reference proteome</keyword>
<keyword id="KW-0744">Spermatogenesis</keyword>
<name>HSP1_EQUAS</name>
<proteinExistence type="evidence at transcript level"/>
<protein>
    <recommendedName>
        <fullName>Sperm protamine P1</fullName>
    </recommendedName>
</protein>
<feature type="chain" id="PRO_0000191478" description="Sperm protamine P1">
    <location>
        <begin position="1"/>
        <end position="50"/>
    </location>
</feature>
<feature type="disulfide bond" description="Interchain (with C-23)" evidence="2">
    <location>
        <position position="6"/>
    </location>
</feature>
<feature type="disulfide bond" evidence="2">
    <location>
        <begin position="7"/>
        <end position="15"/>
    </location>
</feature>
<feature type="disulfide bond" description="Interchain (with C-6)" evidence="2">
    <location>
        <position position="23"/>
    </location>
</feature>
<feature type="disulfide bond" description="Interchain (with C-37)" evidence="2">
    <location>
        <position position="37"/>
    </location>
</feature>
<feature type="disulfide bond" evidence="2">
    <location>
        <begin position="38"/>
        <end position="46"/>
    </location>
</feature>
<dbReference type="EMBL" id="AY726547">
    <property type="protein sequence ID" value="AAU12842.1"/>
    <property type="molecule type" value="Genomic_DNA"/>
</dbReference>
<dbReference type="Ensembl" id="ENSEAST00005072810.1">
    <property type="protein sequence ID" value="ENSEASP00005035028.1"/>
    <property type="gene ID" value="ENSEASG00005028900.1"/>
</dbReference>
<dbReference type="OMA" id="MARYICC"/>
<dbReference type="Proteomes" id="UP000694387">
    <property type="component" value="Chromosome 14"/>
</dbReference>
<dbReference type="GO" id="GO:0000786">
    <property type="term" value="C:nucleosome"/>
    <property type="evidence" value="ECO:0007669"/>
    <property type="project" value="UniProtKB-KW"/>
</dbReference>
<dbReference type="GO" id="GO:0005634">
    <property type="term" value="C:nucleus"/>
    <property type="evidence" value="ECO:0007669"/>
    <property type="project" value="UniProtKB-SubCell"/>
</dbReference>
<dbReference type="GO" id="GO:0003677">
    <property type="term" value="F:DNA binding"/>
    <property type="evidence" value="ECO:0007669"/>
    <property type="project" value="UniProtKB-KW"/>
</dbReference>
<dbReference type="GO" id="GO:0030261">
    <property type="term" value="P:chromosome condensation"/>
    <property type="evidence" value="ECO:0007669"/>
    <property type="project" value="UniProtKB-KW"/>
</dbReference>
<dbReference type="GO" id="GO:0035092">
    <property type="term" value="P:sperm DNA condensation"/>
    <property type="evidence" value="ECO:0007669"/>
    <property type="project" value="InterPro"/>
</dbReference>
<dbReference type="InterPro" id="IPR000221">
    <property type="entry name" value="Protamine_P1"/>
</dbReference>
<dbReference type="Pfam" id="PF00260">
    <property type="entry name" value="Protamine_P1"/>
    <property type="match status" value="1"/>
</dbReference>
<dbReference type="PROSITE" id="PS00048">
    <property type="entry name" value="PROTAMINE_P1"/>
    <property type="match status" value="1"/>
</dbReference>
<sequence>MARYRCCRSQSQSRCRRRRRRRCRRRRRRCVRRRRVCCRRYTVLRCRRRR</sequence>
<accession>Q66QC7</accession>
<comment type="function">
    <text evidence="1">Protamines substitute for histones in the chromatin of sperm during the haploid phase of spermatogenesis. They compact sperm DNA into a highly condensed, stable and inactive complex (By similarity).</text>
</comment>
<comment type="subunit">
    <text evidence="1">Cross-linked by interchain disulfide bonds around the DNA-helix.</text>
</comment>
<comment type="subcellular location">
    <subcellularLocation>
        <location evidence="1">Nucleus</location>
    </subcellularLocation>
    <subcellularLocation>
        <location evidence="1">Chromosome</location>
    </subcellularLocation>
</comment>
<comment type="tissue specificity">
    <text>Testis.</text>
</comment>
<comment type="similarity">
    <text evidence="3">Belongs to the protamine P1 family.</text>
</comment>
<organism>
    <name type="scientific">Equus asinus</name>
    <name type="common">Donkey</name>
    <name type="synonym">Equus africanus asinus</name>
    <dbReference type="NCBI Taxonomy" id="9793"/>
    <lineage>
        <taxon>Eukaryota</taxon>
        <taxon>Metazoa</taxon>
        <taxon>Chordata</taxon>
        <taxon>Craniata</taxon>
        <taxon>Vertebrata</taxon>
        <taxon>Euteleostomi</taxon>
        <taxon>Mammalia</taxon>
        <taxon>Eutheria</taxon>
        <taxon>Laurasiatheria</taxon>
        <taxon>Perissodactyla</taxon>
        <taxon>Equidae</taxon>
        <taxon>Equus</taxon>
    </lineage>
</organism>
<reference key="1">
    <citation type="submission" date="2004-08" db="EMBL/GenBank/DDBJ databases">
        <title>Species identification among horse (Equus caballus) and donkey (Equus asinus) and their hybrids by PCR-RFLP.</title>
        <authorList>
            <person name="Zhao C.J."/>
            <person name="Wu C.H."/>
            <person name="Han G.C."/>
            <person name="Qin Y.H."/>
            <person name="Wu K.L."/>
            <person name="Du Y.C."/>
        </authorList>
    </citation>
    <scope>NUCLEOTIDE SEQUENCE [GENOMIC DNA]</scope>
</reference>
<gene>
    <name type="primary">PRM1</name>
</gene>